<comment type="function">
    <text evidence="1">Essential cell division protein. May link together the upstream cell division proteins, which are predominantly cytoplasmic, with the downstream cell division proteins, which are predominantly periplasmic.</text>
</comment>
<comment type="subunit">
    <text evidence="1">Part of a complex composed of FtsB, FtsL and FtsQ.</text>
</comment>
<comment type="subcellular location">
    <subcellularLocation>
        <location evidence="1">Cell inner membrane</location>
        <topology evidence="1">Single-pass type II membrane protein</topology>
    </subcellularLocation>
    <text evidence="1">Localizes to the division septum.</text>
</comment>
<comment type="similarity">
    <text evidence="1">Belongs to the FtsB family.</text>
</comment>
<feature type="chain" id="PRO_1000025702" description="Cell division protein FtsB">
    <location>
        <begin position="1"/>
        <end position="92"/>
    </location>
</feature>
<feature type="topological domain" description="Cytoplasmic" evidence="1">
    <location>
        <begin position="1"/>
        <end position="3"/>
    </location>
</feature>
<feature type="transmembrane region" description="Helical" evidence="1">
    <location>
        <begin position="4"/>
        <end position="21"/>
    </location>
</feature>
<feature type="topological domain" description="Periplasmic" evidence="1">
    <location>
        <begin position="22"/>
        <end position="92"/>
    </location>
</feature>
<feature type="coiled-coil region" evidence="1">
    <location>
        <begin position="28"/>
        <end position="63"/>
    </location>
</feature>
<name>FTSB_HAEIE</name>
<reference key="1">
    <citation type="journal article" date="2007" name="Genome Biol.">
        <title>Characterization and modeling of the Haemophilus influenzae core and supragenomes based on the complete genomic sequences of Rd and 12 clinical nontypeable strains.</title>
        <authorList>
            <person name="Hogg J.S."/>
            <person name="Hu F.Z."/>
            <person name="Janto B."/>
            <person name="Boissy R."/>
            <person name="Hayes J."/>
            <person name="Keefe R."/>
            <person name="Post J.C."/>
            <person name="Ehrlich G.D."/>
        </authorList>
    </citation>
    <scope>NUCLEOTIDE SEQUENCE [LARGE SCALE GENOMIC DNA]</scope>
    <source>
        <strain>PittEE</strain>
    </source>
</reference>
<evidence type="ECO:0000255" key="1">
    <source>
        <dbReference type="HAMAP-Rule" id="MF_00599"/>
    </source>
</evidence>
<gene>
    <name evidence="1" type="primary">ftsB</name>
    <name type="ordered locus">CGSHiEE_08810</name>
</gene>
<proteinExistence type="inferred from homology"/>
<keyword id="KW-0131">Cell cycle</keyword>
<keyword id="KW-0132">Cell division</keyword>
<keyword id="KW-0997">Cell inner membrane</keyword>
<keyword id="KW-1003">Cell membrane</keyword>
<keyword id="KW-0175">Coiled coil</keyword>
<keyword id="KW-0472">Membrane</keyword>
<keyword id="KW-0812">Transmembrane</keyword>
<keyword id="KW-1133">Transmembrane helix</keyword>
<organism>
    <name type="scientific">Haemophilus influenzae (strain PittEE)</name>
    <dbReference type="NCBI Taxonomy" id="374930"/>
    <lineage>
        <taxon>Bacteria</taxon>
        <taxon>Pseudomonadati</taxon>
        <taxon>Pseudomonadota</taxon>
        <taxon>Gammaproteobacteria</taxon>
        <taxon>Pasteurellales</taxon>
        <taxon>Pasteurellaceae</taxon>
        <taxon>Haemophilus</taxon>
    </lineage>
</organism>
<protein>
    <recommendedName>
        <fullName evidence="1">Cell division protein FtsB</fullName>
    </recommendedName>
</protein>
<sequence>MRLLILILLSVLVLFQHDFWFGSNGFLDYRQNAEKIKENQAENEKLSQRNQRINAEIQGLTKGFEAIEERARMQHGLVKENEVFYHIVKESK</sequence>
<dbReference type="EMBL" id="CP000671">
    <property type="protein sequence ID" value="ABQ99059.1"/>
    <property type="molecule type" value="Genomic_DNA"/>
</dbReference>
<dbReference type="SMR" id="A5UE58"/>
<dbReference type="KEGG" id="hip:CGSHiEE_08810"/>
<dbReference type="HOGENOM" id="CLU_134863_5_2_6"/>
<dbReference type="GO" id="GO:0032153">
    <property type="term" value="C:cell division site"/>
    <property type="evidence" value="ECO:0007669"/>
    <property type="project" value="UniProtKB-UniRule"/>
</dbReference>
<dbReference type="GO" id="GO:0030428">
    <property type="term" value="C:cell septum"/>
    <property type="evidence" value="ECO:0007669"/>
    <property type="project" value="TreeGrafter"/>
</dbReference>
<dbReference type="GO" id="GO:0005886">
    <property type="term" value="C:plasma membrane"/>
    <property type="evidence" value="ECO:0007669"/>
    <property type="project" value="UniProtKB-SubCell"/>
</dbReference>
<dbReference type="GO" id="GO:0043093">
    <property type="term" value="P:FtsZ-dependent cytokinesis"/>
    <property type="evidence" value="ECO:0007669"/>
    <property type="project" value="UniProtKB-UniRule"/>
</dbReference>
<dbReference type="HAMAP" id="MF_00599">
    <property type="entry name" value="FtsB"/>
    <property type="match status" value="1"/>
</dbReference>
<dbReference type="InterPro" id="IPR023081">
    <property type="entry name" value="Cell_div_FtsB"/>
</dbReference>
<dbReference type="InterPro" id="IPR007060">
    <property type="entry name" value="FtsL/DivIC"/>
</dbReference>
<dbReference type="NCBIfam" id="NF002058">
    <property type="entry name" value="PRK00888.1"/>
    <property type="match status" value="1"/>
</dbReference>
<dbReference type="PANTHER" id="PTHR37485">
    <property type="entry name" value="CELL DIVISION PROTEIN FTSB"/>
    <property type="match status" value="1"/>
</dbReference>
<dbReference type="PANTHER" id="PTHR37485:SF1">
    <property type="entry name" value="CELL DIVISION PROTEIN FTSB"/>
    <property type="match status" value="1"/>
</dbReference>
<dbReference type="Pfam" id="PF04977">
    <property type="entry name" value="DivIC"/>
    <property type="match status" value="1"/>
</dbReference>
<accession>A5UE58</accession>